<organism>
    <name type="scientific">Oryzias latipes</name>
    <name type="common">Japanese rice fish</name>
    <name type="synonym">Japanese killifish</name>
    <dbReference type="NCBI Taxonomy" id="8090"/>
    <lineage>
        <taxon>Eukaryota</taxon>
        <taxon>Metazoa</taxon>
        <taxon>Chordata</taxon>
        <taxon>Craniata</taxon>
        <taxon>Vertebrata</taxon>
        <taxon>Euteleostomi</taxon>
        <taxon>Actinopterygii</taxon>
        <taxon>Neopterygii</taxon>
        <taxon>Teleostei</taxon>
        <taxon>Neoteleostei</taxon>
        <taxon>Acanthomorphata</taxon>
        <taxon>Ovalentaria</taxon>
        <taxon>Atherinomorphae</taxon>
        <taxon>Beloniformes</taxon>
        <taxon>Adrianichthyidae</taxon>
        <taxon>Oryziinae</taxon>
        <taxon>Oryzias</taxon>
    </lineage>
</organism>
<sequence>MKSLFLSAVLLQFFETCWSQFPRPCANSEGLRTKECCPVWSGDGSPCGALSGRGFCADVSVSDEPNGPQYPHSGIDDRERWPLAFFNRTCRCAGNYGGFNCGECRFGYWGSNCAEYRESVRRNIMSMSTTEQQKFISYLNLAKNTINPDYVITTGTRAEMGENGESPMFSDINTYDLFVWIHYYVSRDTFLGGPGNVWRDIDFAHESAAFLPWHRVYLLHWEQEIRKITGDFNFTIPYWDWRDAQSCEVCTDNLMGGRNALNPNLISPASVFSSWKVICTQQEEYNNQEALCNATAEGPLLRNPGNHDPNRVPRIPTTADVEFTISLPEYETGSMDRFANNSFRNVLEGFASPETGMAVQGQSTMHNALHVFMNGSMSSVQGSANDPIFLLHHAFIDSIFERWLRTHQPPRSIYPRTNAPIGHNDGYYMVPFLPLYRNGDYLLSNKALGYEYAYLLDPGQRFVQEFLTPYLQQAQQIWQWLLGAGILGALIATIVAAVIVFARRKRRRNQKRKRAPSFGERQPLLQSSSEEGSSSYQTTL</sequence>
<accession>P55025</accession>
<proteinExistence type="evidence at transcript level"/>
<protein>
    <recommendedName>
        <fullName>Tyrosinase</fullName>
        <ecNumber>1.14.18.1</ecNumber>
    </recommendedName>
    <alternativeName>
        <fullName>Monophenol monooxygenase</fullName>
    </alternativeName>
</protein>
<comment type="function">
    <text>This is a copper-containing oxidase that functions in the formation of pigments such as melanins and other polyphenolic compounds.</text>
</comment>
<comment type="catalytic activity">
    <reaction>
        <text>2 L-dopa + O2 = 2 L-dopaquinone + 2 H2O</text>
        <dbReference type="Rhea" id="RHEA:34287"/>
        <dbReference type="ChEBI" id="CHEBI:15377"/>
        <dbReference type="ChEBI" id="CHEBI:15379"/>
        <dbReference type="ChEBI" id="CHEBI:57504"/>
        <dbReference type="ChEBI" id="CHEBI:57924"/>
        <dbReference type="EC" id="1.14.18.1"/>
    </reaction>
</comment>
<comment type="catalytic activity">
    <reaction>
        <text>L-tyrosine + O2 = L-dopaquinone + H2O</text>
        <dbReference type="Rhea" id="RHEA:18117"/>
        <dbReference type="ChEBI" id="CHEBI:15377"/>
        <dbReference type="ChEBI" id="CHEBI:15379"/>
        <dbReference type="ChEBI" id="CHEBI:57924"/>
        <dbReference type="ChEBI" id="CHEBI:58315"/>
        <dbReference type="EC" id="1.14.18.1"/>
    </reaction>
</comment>
<comment type="cofactor">
    <cofactor evidence="1">
        <name>Cu(2+)</name>
        <dbReference type="ChEBI" id="CHEBI:29036"/>
    </cofactor>
    <text evidence="1">Binds 2 copper ions per subunit.</text>
</comment>
<comment type="subcellular location">
    <subcellularLocation>
        <location>Melanosome membrane</location>
        <topology>Single-pass type I membrane protein</topology>
    </subcellularLocation>
</comment>
<comment type="similarity">
    <text evidence="4">Belongs to the tyrosinase family.</text>
</comment>
<feature type="signal peptide" evidence="2">
    <location>
        <begin position="1"/>
        <end position="19"/>
    </location>
</feature>
<feature type="chain" id="PRO_0000035883" description="Tyrosinase">
    <location>
        <begin position="20"/>
        <end position="540"/>
    </location>
</feature>
<feature type="topological domain" description="Lumenal, melanosome" evidence="2">
    <location>
        <begin position="20"/>
        <end position="480"/>
    </location>
</feature>
<feature type="transmembrane region" description="Helical" evidence="2">
    <location>
        <begin position="481"/>
        <end position="501"/>
    </location>
</feature>
<feature type="topological domain" description="Cytoplasmic" evidence="2">
    <location>
        <begin position="502"/>
        <end position="540"/>
    </location>
</feature>
<feature type="region of interest" description="Disordered" evidence="3">
    <location>
        <begin position="511"/>
        <end position="540"/>
    </location>
</feature>
<feature type="compositionally biased region" description="Low complexity" evidence="3">
    <location>
        <begin position="527"/>
        <end position="540"/>
    </location>
</feature>
<feature type="binding site" evidence="1">
    <location>
        <position position="182"/>
    </location>
    <ligand>
        <name>Cu cation</name>
        <dbReference type="ChEBI" id="CHEBI:23378"/>
        <label>A</label>
    </ligand>
</feature>
<feature type="binding site" evidence="1">
    <location>
        <position position="205"/>
    </location>
    <ligand>
        <name>Cu cation</name>
        <dbReference type="ChEBI" id="CHEBI:23378"/>
        <label>A</label>
    </ligand>
</feature>
<feature type="binding site" evidence="1">
    <location>
        <position position="214"/>
    </location>
    <ligand>
        <name>Cu cation</name>
        <dbReference type="ChEBI" id="CHEBI:23378"/>
        <label>A</label>
    </ligand>
</feature>
<feature type="binding site" evidence="1">
    <location>
        <position position="366"/>
    </location>
    <ligand>
        <name>Cu cation</name>
        <dbReference type="ChEBI" id="CHEBI:23378"/>
        <label>B</label>
    </ligand>
</feature>
<feature type="binding site" evidence="1">
    <location>
        <position position="370"/>
    </location>
    <ligand>
        <name>Cu cation</name>
        <dbReference type="ChEBI" id="CHEBI:23378"/>
        <label>B</label>
    </ligand>
</feature>
<feature type="binding site" evidence="1">
    <location>
        <position position="393"/>
    </location>
    <ligand>
        <name>Cu cation</name>
        <dbReference type="ChEBI" id="CHEBI:23378"/>
        <label>B</label>
    </ligand>
</feature>
<feature type="glycosylation site" description="N-linked (GlcNAc...) asparagine" evidence="2">
    <location>
        <position position="87"/>
    </location>
</feature>
<feature type="glycosylation site" description="N-linked (GlcNAc...) asparagine" evidence="2">
    <location>
        <position position="233"/>
    </location>
</feature>
<feature type="glycosylation site" description="N-linked (GlcNAc...) asparagine" evidence="2">
    <location>
        <position position="293"/>
    </location>
</feature>
<feature type="glycosylation site" description="N-linked (GlcNAc...) asparagine" evidence="2">
    <location>
        <position position="340"/>
    </location>
</feature>
<feature type="glycosylation site" description="N-linked (GlcNAc...) asparagine" evidence="2">
    <location>
        <position position="374"/>
    </location>
</feature>
<keyword id="KW-0186">Copper</keyword>
<keyword id="KW-0325">Glycoprotein</keyword>
<keyword id="KW-0470">Melanin biosynthesis</keyword>
<keyword id="KW-0472">Membrane</keyword>
<keyword id="KW-0479">Metal-binding</keyword>
<keyword id="KW-0503">Monooxygenase</keyword>
<keyword id="KW-0560">Oxidoreductase</keyword>
<keyword id="KW-1185">Reference proteome</keyword>
<keyword id="KW-0732">Signal</keyword>
<keyword id="KW-0812">Transmembrane</keyword>
<keyword id="KW-1133">Transmembrane helix</keyword>
<dbReference type="EC" id="1.14.18.1"/>
<dbReference type="EMBL" id="D29687">
    <property type="protein sequence ID" value="BAA06156.1"/>
    <property type="molecule type" value="mRNA"/>
</dbReference>
<dbReference type="EMBL" id="D29686">
    <property type="protein sequence ID" value="BAA06155.1"/>
    <property type="molecule type" value="mRNA"/>
</dbReference>
<dbReference type="EMBL" id="AB010101">
    <property type="protein sequence ID" value="BAA31348.1"/>
    <property type="molecule type" value="Genomic_DNA"/>
</dbReference>
<dbReference type="RefSeq" id="NP_001098272.1">
    <property type="nucleotide sequence ID" value="NM_001104802.1"/>
</dbReference>
<dbReference type="SMR" id="P55025"/>
<dbReference type="STRING" id="8090.ENSORLP00000041517"/>
<dbReference type="GlyCosmos" id="P55025">
    <property type="glycosylation" value="5 sites, No reported glycans"/>
</dbReference>
<dbReference type="GeneID" id="100049427"/>
<dbReference type="KEGG" id="ola:100049427"/>
<dbReference type="CTD" id="7299"/>
<dbReference type="eggNOG" id="ENOG502QRET">
    <property type="taxonomic scope" value="Eukaryota"/>
</dbReference>
<dbReference type="InParanoid" id="P55025"/>
<dbReference type="OrthoDB" id="6132182at2759"/>
<dbReference type="Proteomes" id="UP000001038">
    <property type="component" value="Unplaced"/>
</dbReference>
<dbReference type="Proteomes" id="UP000265180">
    <property type="component" value="Chromosome 9"/>
</dbReference>
<dbReference type="Proteomes" id="UP000265200">
    <property type="component" value="Chromosome 9"/>
</dbReference>
<dbReference type="GO" id="GO:0033162">
    <property type="term" value="C:melanosome membrane"/>
    <property type="evidence" value="ECO:0007669"/>
    <property type="project" value="UniProtKB-SubCell"/>
</dbReference>
<dbReference type="GO" id="GO:0046872">
    <property type="term" value="F:metal ion binding"/>
    <property type="evidence" value="ECO:0007669"/>
    <property type="project" value="UniProtKB-KW"/>
</dbReference>
<dbReference type="GO" id="GO:0004503">
    <property type="term" value="F:tyrosinase activity"/>
    <property type="evidence" value="ECO:0000318"/>
    <property type="project" value="GO_Central"/>
</dbReference>
<dbReference type="GO" id="GO:0042438">
    <property type="term" value="P:melanin biosynthetic process"/>
    <property type="evidence" value="ECO:0000318"/>
    <property type="project" value="GO_Central"/>
</dbReference>
<dbReference type="GO" id="GO:0043473">
    <property type="term" value="P:pigmentation"/>
    <property type="evidence" value="ECO:0000318"/>
    <property type="project" value="GO_Central"/>
</dbReference>
<dbReference type="CDD" id="cd00055">
    <property type="entry name" value="EGF_Lam"/>
    <property type="match status" value="1"/>
</dbReference>
<dbReference type="FunFam" id="1.10.1280.10:FF:000003">
    <property type="entry name" value="Tyrosinase"/>
    <property type="match status" value="1"/>
</dbReference>
<dbReference type="Gene3D" id="1.10.1280.10">
    <property type="entry name" value="Di-copper center containing domain from catechol oxidase"/>
    <property type="match status" value="1"/>
</dbReference>
<dbReference type="InterPro" id="IPR008922">
    <property type="entry name" value="Di-copper_centre_dom_sf"/>
</dbReference>
<dbReference type="InterPro" id="IPR002049">
    <property type="entry name" value="LE_dom"/>
</dbReference>
<dbReference type="InterPro" id="IPR050316">
    <property type="entry name" value="Tyrosinase/Hemocyanin"/>
</dbReference>
<dbReference type="InterPro" id="IPR002227">
    <property type="entry name" value="Tyrosinase_Cu-bd"/>
</dbReference>
<dbReference type="PANTHER" id="PTHR11474:SF124">
    <property type="entry name" value="TYROSINASE"/>
    <property type="match status" value="1"/>
</dbReference>
<dbReference type="PANTHER" id="PTHR11474">
    <property type="entry name" value="TYROSINASE FAMILY MEMBER"/>
    <property type="match status" value="1"/>
</dbReference>
<dbReference type="Pfam" id="PF00264">
    <property type="entry name" value="Tyrosinase"/>
    <property type="match status" value="1"/>
</dbReference>
<dbReference type="PRINTS" id="PR00092">
    <property type="entry name" value="TYROSINASE"/>
</dbReference>
<dbReference type="SUPFAM" id="SSF48056">
    <property type="entry name" value="Di-copper centre-containing domain"/>
    <property type="match status" value="1"/>
</dbReference>
<dbReference type="PROSITE" id="PS00497">
    <property type="entry name" value="TYROSINASE_1"/>
    <property type="match status" value="1"/>
</dbReference>
<dbReference type="PROSITE" id="PS00498">
    <property type="entry name" value="TYROSINASE_2"/>
    <property type="match status" value="1"/>
</dbReference>
<gene>
    <name type="primary">tyr</name>
    <name type="synonym">tyro</name>
</gene>
<name>TYRO_ORYLA</name>
<evidence type="ECO:0000250" key="1">
    <source>
        <dbReference type="UniProtKB" id="Q9ZP19"/>
    </source>
</evidence>
<evidence type="ECO:0000255" key="2"/>
<evidence type="ECO:0000256" key="3">
    <source>
        <dbReference type="SAM" id="MobiDB-lite"/>
    </source>
</evidence>
<evidence type="ECO:0000305" key="4"/>
<reference key="1">
    <citation type="journal article" date="1994" name="Gene">
        <title>Expression of the tyrosinase-encoding gene in a colorless melanophore mutant of the medaka fish, Oryzias latipes.</title>
        <authorList>
            <person name="Inagaki H."/>
            <person name="Bessho Y."/>
            <person name="Koga A."/>
            <person name="Hori H."/>
        </authorList>
    </citation>
    <scope>NUCLEOTIDE SEQUENCE [MRNA]</scope>
    <source>
        <tissue>Eye</tissue>
    </source>
</reference>
<reference key="2">
    <citation type="submission" date="1998-01" db="EMBL/GenBank/DDBJ databases">
        <title>The tyrosinase gene from medaka: transgenic expression rescued albino mutation.</title>
        <authorList>
            <person name="Inagaki H."/>
            <person name="Koga A."/>
            <person name="Bessho Y."/>
            <person name="Hori H."/>
        </authorList>
    </citation>
    <scope>NUCLEOTIDE SEQUENCE</scope>
</reference>